<feature type="chain" id="PRO_1000196100" description="Large ribosomal subunit protein bL34">
    <location>
        <begin position="1"/>
        <end position="46"/>
    </location>
</feature>
<dbReference type="EMBL" id="CP001144">
    <property type="protein sequence ID" value="ACH74079.1"/>
    <property type="molecule type" value="Genomic_DNA"/>
</dbReference>
<dbReference type="RefSeq" id="WP_000831330.1">
    <property type="nucleotide sequence ID" value="NC_011205.1"/>
</dbReference>
<dbReference type="SMR" id="B5FN11"/>
<dbReference type="GeneID" id="98190980"/>
<dbReference type="KEGG" id="sed:SeD_A4231"/>
<dbReference type="HOGENOM" id="CLU_129938_2_1_6"/>
<dbReference type="Proteomes" id="UP000008322">
    <property type="component" value="Chromosome"/>
</dbReference>
<dbReference type="GO" id="GO:1990904">
    <property type="term" value="C:ribonucleoprotein complex"/>
    <property type="evidence" value="ECO:0007669"/>
    <property type="project" value="UniProtKB-KW"/>
</dbReference>
<dbReference type="GO" id="GO:0005840">
    <property type="term" value="C:ribosome"/>
    <property type="evidence" value="ECO:0007669"/>
    <property type="project" value="UniProtKB-KW"/>
</dbReference>
<dbReference type="GO" id="GO:0003735">
    <property type="term" value="F:structural constituent of ribosome"/>
    <property type="evidence" value="ECO:0007669"/>
    <property type="project" value="InterPro"/>
</dbReference>
<dbReference type="GO" id="GO:0006412">
    <property type="term" value="P:translation"/>
    <property type="evidence" value="ECO:0007669"/>
    <property type="project" value="UniProtKB-UniRule"/>
</dbReference>
<dbReference type="FunFam" id="1.10.287.3980:FF:000001">
    <property type="entry name" value="Mitochondrial ribosomal protein L34"/>
    <property type="match status" value="1"/>
</dbReference>
<dbReference type="Gene3D" id="1.10.287.3980">
    <property type="match status" value="1"/>
</dbReference>
<dbReference type="HAMAP" id="MF_00391">
    <property type="entry name" value="Ribosomal_bL34"/>
    <property type="match status" value="1"/>
</dbReference>
<dbReference type="InterPro" id="IPR000271">
    <property type="entry name" value="Ribosomal_bL34"/>
</dbReference>
<dbReference type="InterPro" id="IPR020939">
    <property type="entry name" value="Ribosomal_bL34_CS"/>
</dbReference>
<dbReference type="NCBIfam" id="TIGR01030">
    <property type="entry name" value="rpmH_bact"/>
    <property type="match status" value="1"/>
</dbReference>
<dbReference type="PANTHER" id="PTHR14503:SF4">
    <property type="entry name" value="LARGE RIBOSOMAL SUBUNIT PROTEIN BL34M"/>
    <property type="match status" value="1"/>
</dbReference>
<dbReference type="PANTHER" id="PTHR14503">
    <property type="entry name" value="MITOCHONDRIAL RIBOSOMAL PROTEIN 34 FAMILY MEMBER"/>
    <property type="match status" value="1"/>
</dbReference>
<dbReference type="Pfam" id="PF00468">
    <property type="entry name" value="Ribosomal_L34"/>
    <property type="match status" value="1"/>
</dbReference>
<dbReference type="PROSITE" id="PS00784">
    <property type="entry name" value="RIBOSOMAL_L34"/>
    <property type="match status" value="1"/>
</dbReference>
<protein>
    <recommendedName>
        <fullName evidence="1">Large ribosomal subunit protein bL34</fullName>
    </recommendedName>
    <alternativeName>
        <fullName evidence="2">50S ribosomal protein L34</fullName>
    </alternativeName>
</protein>
<organism>
    <name type="scientific">Salmonella dublin (strain CT_02021853)</name>
    <dbReference type="NCBI Taxonomy" id="439851"/>
    <lineage>
        <taxon>Bacteria</taxon>
        <taxon>Pseudomonadati</taxon>
        <taxon>Pseudomonadota</taxon>
        <taxon>Gammaproteobacteria</taxon>
        <taxon>Enterobacterales</taxon>
        <taxon>Enterobacteriaceae</taxon>
        <taxon>Salmonella</taxon>
    </lineage>
</organism>
<accession>B5FN11</accession>
<comment type="similarity">
    <text evidence="1">Belongs to the bacterial ribosomal protein bL34 family.</text>
</comment>
<keyword id="KW-0687">Ribonucleoprotein</keyword>
<keyword id="KW-0689">Ribosomal protein</keyword>
<name>RL34_SALDC</name>
<proteinExistence type="inferred from homology"/>
<sequence length="46" mass="5380">MKRTFQPSVLKRNRSHGFRARMATKNGRQVLARRRAKGRARLTVSK</sequence>
<evidence type="ECO:0000255" key="1">
    <source>
        <dbReference type="HAMAP-Rule" id="MF_00391"/>
    </source>
</evidence>
<evidence type="ECO:0000305" key="2"/>
<gene>
    <name evidence="1" type="primary">rpmH</name>
    <name type="ordered locus">SeD_A4231</name>
</gene>
<reference key="1">
    <citation type="journal article" date="2011" name="J. Bacteriol.">
        <title>Comparative genomics of 28 Salmonella enterica isolates: evidence for CRISPR-mediated adaptive sublineage evolution.</title>
        <authorList>
            <person name="Fricke W.F."/>
            <person name="Mammel M.K."/>
            <person name="McDermott P.F."/>
            <person name="Tartera C."/>
            <person name="White D.G."/>
            <person name="Leclerc J.E."/>
            <person name="Ravel J."/>
            <person name="Cebula T.A."/>
        </authorList>
    </citation>
    <scope>NUCLEOTIDE SEQUENCE [LARGE SCALE GENOMIC DNA]</scope>
    <source>
        <strain>CT_02021853</strain>
    </source>
</reference>